<protein>
    <recommendedName>
        <fullName evidence="1">Cell division protein ZapA</fullName>
    </recommendedName>
    <alternativeName>
        <fullName evidence="1">Z ring-associated protein ZapA</fullName>
    </alternativeName>
</protein>
<sequence length="109" mass="12594">MSAQPVDLQIFGRSLRVNCPPEQRDALNQAAEDLNQRLQDLKERTRVTNTEQLVFIAALNISYELTQEKAKTRDYASSMEQRIRMLQQTIEQALLEQGRISERPGSKFE</sequence>
<gene>
    <name evidence="1" type="primary">zapA</name>
    <name type="ordered locus">KPK_0754</name>
</gene>
<reference key="1">
    <citation type="journal article" date="2008" name="PLoS Genet.">
        <title>Complete genome sequence of the N2-fixing broad host range endophyte Klebsiella pneumoniae 342 and virulence predictions verified in mice.</title>
        <authorList>
            <person name="Fouts D.E."/>
            <person name="Tyler H.L."/>
            <person name="DeBoy R.T."/>
            <person name="Daugherty S."/>
            <person name="Ren Q."/>
            <person name="Badger J.H."/>
            <person name="Durkin A.S."/>
            <person name="Huot H."/>
            <person name="Shrivastava S."/>
            <person name="Kothari S."/>
            <person name="Dodson R.J."/>
            <person name="Mohamoud Y."/>
            <person name="Khouri H."/>
            <person name="Roesch L.F.W."/>
            <person name="Krogfelt K.A."/>
            <person name="Struve C."/>
            <person name="Triplett E.W."/>
            <person name="Methe B.A."/>
        </authorList>
    </citation>
    <scope>NUCLEOTIDE SEQUENCE [LARGE SCALE GENOMIC DNA]</scope>
    <source>
        <strain>342</strain>
    </source>
</reference>
<dbReference type="EMBL" id="CP000964">
    <property type="protein sequence ID" value="ACI09723.1"/>
    <property type="molecule type" value="Genomic_DNA"/>
</dbReference>
<dbReference type="SMR" id="B5XUC8"/>
<dbReference type="KEGG" id="kpe:KPK_0754"/>
<dbReference type="HOGENOM" id="CLU_116623_3_0_6"/>
<dbReference type="Proteomes" id="UP000001734">
    <property type="component" value="Chromosome"/>
</dbReference>
<dbReference type="GO" id="GO:0032153">
    <property type="term" value="C:cell division site"/>
    <property type="evidence" value="ECO:0007669"/>
    <property type="project" value="TreeGrafter"/>
</dbReference>
<dbReference type="GO" id="GO:0030428">
    <property type="term" value="C:cell septum"/>
    <property type="evidence" value="ECO:0007669"/>
    <property type="project" value="TreeGrafter"/>
</dbReference>
<dbReference type="GO" id="GO:0005829">
    <property type="term" value="C:cytosol"/>
    <property type="evidence" value="ECO:0007669"/>
    <property type="project" value="TreeGrafter"/>
</dbReference>
<dbReference type="GO" id="GO:0005886">
    <property type="term" value="C:plasma membrane"/>
    <property type="evidence" value="ECO:0007669"/>
    <property type="project" value="UniProtKB-UniRule"/>
</dbReference>
<dbReference type="GO" id="GO:0000917">
    <property type="term" value="P:division septum assembly"/>
    <property type="evidence" value="ECO:0007669"/>
    <property type="project" value="UniProtKB-KW"/>
</dbReference>
<dbReference type="GO" id="GO:0043093">
    <property type="term" value="P:FtsZ-dependent cytokinesis"/>
    <property type="evidence" value="ECO:0007669"/>
    <property type="project" value="TreeGrafter"/>
</dbReference>
<dbReference type="GO" id="GO:0000921">
    <property type="term" value="P:septin ring assembly"/>
    <property type="evidence" value="ECO:0007669"/>
    <property type="project" value="TreeGrafter"/>
</dbReference>
<dbReference type="FunFam" id="1.20.5.50:FF:000001">
    <property type="entry name" value="Cell division protein ZapA"/>
    <property type="match status" value="1"/>
</dbReference>
<dbReference type="FunFam" id="3.30.160.880:FF:000001">
    <property type="entry name" value="Cell division protein ZapA"/>
    <property type="match status" value="1"/>
</dbReference>
<dbReference type="Gene3D" id="1.20.5.50">
    <property type="match status" value="1"/>
</dbReference>
<dbReference type="Gene3D" id="3.30.160.880">
    <property type="entry name" value="Cell division protein ZapA protomer, N-terminal domain"/>
    <property type="match status" value="1"/>
</dbReference>
<dbReference type="HAMAP" id="MF_02012">
    <property type="entry name" value="ZapA_type1"/>
    <property type="match status" value="1"/>
</dbReference>
<dbReference type="InterPro" id="IPR007838">
    <property type="entry name" value="Cell_div_ZapA-like"/>
</dbReference>
<dbReference type="InterPro" id="IPR036192">
    <property type="entry name" value="Cell_div_ZapA-like_sf"/>
</dbReference>
<dbReference type="InterPro" id="IPR023771">
    <property type="entry name" value="Cell_div_ZapA_eubact"/>
</dbReference>
<dbReference type="InterPro" id="IPR042233">
    <property type="entry name" value="Cell_div_ZapA_N"/>
</dbReference>
<dbReference type="NCBIfam" id="NF008209">
    <property type="entry name" value="PRK10972.1"/>
    <property type="match status" value="1"/>
</dbReference>
<dbReference type="PANTHER" id="PTHR34981">
    <property type="entry name" value="CELL DIVISION PROTEIN ZAPA"/>
    <property type="match status" value="1"/>
</dbReference>
<dbReference type="PANTHER" id="PTHR34981:SF1">
    <property type="entry name" value="CELL DIVISION PROTEIN ZAPA"/>
    <property type="match status" value="1"/>
</dbReference>
<dbReference type="Pfam" id="PF05164">
    <property type="entry name" value="ZapA"/>
    <property type="match status" value="1"/>
</dbReference>
<dbReference type="SUPFAM" id="SSF102829">
    <property type="entry name" value="Cell division protein ZapA-like"/>
    <property type="match status" value="1"/>
</dbReference>
<keyword id="KW-0131">Cell cycle</keyword>
<keyword id="KW-0132">Cell division</keyword>
<keyword id="KW-0175">Coiled coil</keyword>
<keyword id="KW-0963">Cytoplasm</keyword>
<keyword id="KW-0717">Septation</keyword>
<name>ZAPA_KLEP3</name>
<comment type="function">
    <text evidence="1">Activator of cell division through the inhibition of FtsZ GTPase activity, therefore promoting FtsZ assembly into bundles of protofilaments necessary for the formation of the division Z ring. It is recruited early at mid-cell but it is not essential for cell division.</text>
</comment>
<comment type="subunit">
    <text evidence="1">Homodimer. Interacts with FtsZ.</text>
</comment>
<comment type="subcellular location">
    <subcellularLocation>
        <location evidence="1">Cytoplasm</location>
    </subcellularLocation>
    <text evidence="1">Localizes at mid-cell.</text>
</comment>
<comment type="similarity">
    <text evidence="1">Belongs to the ZapA family. Type 1 subfamily.</text>
</comment>
<organism>
    <name type="scientific">Klebsiella pneumoniae (strain 342)</name>
    <dbReference type="NCBI Taxonomy" id="507522"/>
    <lineage>
        <taxon>Bacteria</taxon>
        <taxon>Pseudomonadati</taxon>
        <taxon>Pseudomonadota</taxon>
        <taxon>Gammaproteobacteria</taxon>
        <taxon>Enterobacterales</taxon>
        <taxon>Enterobacteriaceae</taxon>
        <taxon>Klebsiella/Raoultella group</taxon>
        <taxon>Klebsiella</taxon>
        <taxon>Klebsiella pneumoniae complex</taxon>
    </lineage>
</organism>
<proteinExistence type="inferred from homology"/>
<evidence type="ECO:0000255" key="1">
    <source>
        <dbReference type="HAMAP-Rule" id="MF_02012"/>
    </source>
</evidence>
<feature type="chain" id="PRO_1000189517" description="Cell division protein ZapA">
    <location>
        <begin position="1"/>
        <end position="109"/>
    </location>
</feature>
<feature type="coiled-coil region" evidence="1">
    <location>
        <begin position="21"/>
        <end position="99"/>
    </location>
</feature>
<accession>B5XUC8</accession>